<name>CBIE_SALTY</name>
<sequence length="201" mass="21778">MLTVVGMGPAGRHLMTPAALEAIDHADALAGGKRHLAQFPAFGGERFTLGADIGALLSWIAARRDKGIVVLASGDPLFYGIGTRLVAHFGIEQVRIIPGISAVQYLCAQAGIDMNDMWLTSSHGRCVSFEQLANHRKVAMVTDARCGPREIARELVARGKGHRLMVIGENLAMENERIHWLPVSAVNADYEMNAVVILDER</sequence>
<proteinExistence type="evidence at protein level"/>
<accession>P0A2H1</accession>
<accession>Q05629</accession>
<dbReference type="EC" id="2.1.1.289"/>
<dbReference type="EMBL" id="L12006">
    <property type="protein sequence ID" value="AAA27256.1"/>
    <property type="molecule type" value="Genomic_DNA"/>
</dbReference>
<dbReference type="EMBL" id="AE006468">
    <property type="protein sequence ID" value="AAL20935.1"/>
    <property type="molecule type" value="Genomic_DNA"/>
</dbReference>
<dbReference type="RefSeq" id="NP_460976.1">
    <property type="nucleotide sequence ID" value="NC_003197.2"/>
</dbReference>
<dbReference type="RefSeq" id="WP_000958833.1">
    <property type="nucleotide sequence ID" value="NC_003197.2"/>
</dbReference>
<dbReference type="SMR" id="P0A2H1"/>
<dbReference type="STRING" id="99287.STM2031"/>
<dbReference type="PaxDb" id="99287-STM2031"/>
<dbReference type="GeneID" id="1253552"/>
<dbReference type="KEGG" id="stm:STM2031"/>
<dbReference type="PATRIC" id="fig|99287.12.peg.2153"/>
<dbReference type="HOGENOM" id="CLU_089162_2_0_6"/>
<dbReference type="OMA" id="KISWEDY"/>
<dbReference type="PhylomeDB" id="P0A2H1"/>
<dbReference type="BioCyc" id="MetaCyc:MONOMER-13225"/>
<dbReference type="BioCyc" id="SENT99287:STM2031-MONOMER"/>
<dbReference type="UniPathway" id="UPA00148">
    <property type="reaction ID" value="UER00229"/>
</dbReference>
<dbReference type="Proteomes" id="UP000001014">
    <property type="component" value="Chromosome"/>
</dbReference>
<dbReference type="GO" id="GO:0043777">
    <property type="term" value="F:cobalt-precorrin-7 C15-methyltransferase activity"/>
    <property type="evidence" value="ECO:0007669"/>
    <property type="project" value="RHEA"/>
</dbReference>
<dbReference type="GO" id="GO:0008276">
    <property type="term" value="F:protein methyltransferase activity"/>
    <property type="evidence" value="ECO:0007669"/>
    <property type="project" value="InterPro"/>
</dbReference>
<dbReference type="GO" id="GO:0009236">
    <property type="term" value="P:cobalamin biosynthetic process"/>
    <property type="evidence" value="ECO:0007669"/>
    <property type="project" value="UniProtKB-UniPathway"/>
</dbReference>
<dbReference type="GO" id="GO:0032259">
    <property type="term" value="P:methylation"/>
    <property type="evidence" value="ECO:0007669"/>
    <property type="project" value="UniProtKB-KW"/>
</dbReference>
<dbReference type="CDD" id="cd11644">
    <property type="entry name" value="Precorrin-6Y-MT"/>
    <property type="match status" value="1"/>
</dbReference>
<dbReference type="Gene3D" id="3.40.1010.10">
    <property type="entry name" value="Cobalt-precorrin-4 Transmethylase, Domain 1"/>
    <property type="match status" value="1"/>
</dbReference>
<dbReference type="Gene3D" id="3.30.950.10">
    <property type="entry name" value="Methyltransferase, Cobalt-precorrin-4 Transmethylase, Domain 2"/>
    <property type="match status" value="1"/>
</dbReference>
<dbReference type="InterPro" id="IPR000878">
    <property type="entry name" value="4pyrrol_Mease"/>
</dbReference>
<dbReference type="InterPro" id="IPR035996">
    <property type="entry name" value="4pyrrol_Methylase_sf"/>
</dbReference>
<dbReference type="InterPro" id="IPR014777">
    <property type="entry name" value="4pyrrole_Mease_sub1"/>
</dbReference>
<dbReference type="InterPro" id="IPR014776">
    <property type="entry name" value="4pyrrole_Mease_sub2"/>
</dbReference>
<dbReference type="InterPro" id="IPR012818">
    <property type="entry name" value="CbiE"/>
</dbReference>
<dbReference type="InterPro" id="IPR050714">
    <property type="entry name" value="Cobalamin_biosynth_MTase"/>
</dbReference>
<dbReference type="NCBIfam" id="TIGR02467">
    <property type="entry name" value="CbiE"/>
    <property type="match status" value="1"/>
</dbReference>
<dbReference type="NCBIfam" id="NF004454">
    <property type="entry name" value="PRK05787.1-1"/>
    <property type="match status" value="1"/>
</dbReference>
<dbReference type="PANTHER" id="PTHR43182">
    <property type="entry name" value="COBALT-PRECORRIN-6B C(15)-METHYLTRANSFERASE (DECARBOXYLATING)"/>
    <property type="match status" value="1"/>
</dbReference>
<dbReference type="PANTHER" id="PTHR43182:SF1">
    <property type="entry name" value="COBALT-PRECORRIN-7 C(5)-METHYLTRANSFERASE"/>
    <property type="match status" value="1"/>
</dbReference>
<dbReference type="Pfam" id="PF00590">
    <property type="entry name" value="TP_methylase"/>
    <property type="match status" value="1"/>
</dbReference>
<dbReference type="SUPFAM" id="SSF53790">
    <property type="entry name" value="Tetrapyrrole methylase"/>
    <property type="match status" value="1"/>
</dbReference>
<evidence type="ECO:0000269" key="1">
    <source>
    </source>
</evidence>
<evidence type="ECO:0000305" key="2"/>
<protein>
    <recommendedName>
        <fullName>Cobalt-precorrin-7 C(5)-methyltransferase</fullName>
        <ecNumber>2.1.1.289</ecNumber>
    </recommendedName>
    <alternativeName>
        <fullName>Cobalt-precorrin-6Y C(5)-methyltransferase</fullName>
        <shortName>Cobalt-precorrin-6 methyltransferase</shortName>
        <shortName>Cobalt-precorrin-6Y methylase</shortName>
    </alternativeName>
</protein>
<reference key="1">
    <citation type="journal article" date="1993" name="J. Bacteriol.">
        <title>Characterization of the cobalamin (vitamin B12) biosynthetic genes of Salmonella typhimurium.</title>
        <authorList>
            <person name="Roth J.R."/>
            <person name="Lawrence J.G."/>
            <person name="Rubenfield M."/>
            <person name="Kieffer-Higgins S."/>
            <person name="Church G.M."/>
        </authorList>
    </citation>
    <scope>NUCLEOTIDE SEQUENCE [GENOMIC DNA]</scope>
    <scope>PROTEIN SEQUENCE OF N-TERMINUS</scope>
    <source>
        <strain>LT2</strain>
    </source>
</reference>
<reference key="2">
    <citation type="journal article" date="2001" name="Nature">
        <title>Complete genome sequence of Salmonella enterica serovar Typhimurium LT2.</title>
        <authorList>
            <person name="McClelland M."/>
            <person name="Sanderson K.E."/>
            <person name="Spieth J."/>
            <person name="Clifton S.W."/>
            <person name="Latreille P."/>
            <person name="Courtney L."/>
            <person name="Porwollik S."/>
            <person name="Ali J."/>
            <person name="Dante M."/>
            <person name="Du F."/>
            <person name="Hou S."/>
            <person name="Layman D."/>
            <person name="Leonard S."/>
            <person name="Nguyen C."/>
            <person name="Scott K."/>
            <person name="Holmes A."/>
            <person name="Grewal N."/>
            <person name="Mulvaney E."/>
            <person name="Ryan E."/>
            <person name="Sun H."/>
            <person name="Florea L."/>
            <person name="Miller W."/>
            <person name="Stoneking T."/>
            <person name="Nhan M."/>
            <person name="Waterston R."/>
            <person name="Wilson R.K."/>
        </authorList>
    </citation>
    <scope>NUCLEOTIDE SEQUENCE [LARGE SCALE GENOMIC DNA]</scope>
    <source>
        <strain>LT2 / SGSC1412 / ATCC 700720</strain>
    </source>
</reference>
<reference key="3">
    <citation type="journal article" date="1992" name="FEBS Lett.">
        <title>Expression of 9 Salmonella typhimurium enzymes for cobinamide synthesis. Identification of the 11-methyl and 20-methyl transferases of corrin biosynthesis.</title>
        <authorList>
            <person name="Roessner C.A."/>
            <person name="Warren M.J."/>
            <person name="Santander P.J."/>
            <person name="Atshaves B.P."/>
            <person name="Ozaki S."/>
            <person name="Stolowich N.J."/>
            <person name="Iida K."/>
            <person name="Scott A.I."/>
        </authorList>
    </citation>
    <scope>PROTEIN SEQUENCE OF 1-10</scope>
</reference>
<reference key="4">
    <citation type="journal article" date="2006" name="Bioorg. Med. Chem.">
        <title>Structural characterization of novel cobalt corrinoids synthesized by enzymes of the vitamin B12 anaerobic pathway.</title>
        <authorList>
            <person name="Santander P.J."/>
            <person name="Kajiwara Y."/>
            <person name="Williams H.J."/>
            <person name="Scott A.I."/>
        </authorList>
    </citation>
    <scope>FUNCTION</scope>
</reference>
<organism>
    <name type="scientific">Salmonella typhimurium (strain LT2 / SGSC1412 / ATCC 700720)</name>
    <dbReference type="NCBI Taxonomy" id="99287"/>
    <lineage>
        <taxon>Bacteria</taxon>
        <taxon>Pseudomonadati</taxon>
        <taxon>Pseudomonadota</taxon>
        <taxon>Gammaproteobacteria</taxon>
        <taxon>Enterobacterales</taxon>
        <taxon>Enterobacteriaceae</taxon>
        <taxon>Salmonella</taxon>
    </lineage>
</organism>
<gene>
    <name type="primary">cbiE</name>
    <name type="ordered locus">STM2031</name>
</gene>
<keyword id="KW-0169">Cobalamin biosynthesis</keyword>
<keyword id="KW-0903">Direct protein sequencing</keyword>
<keyword id="KW-0489">Methyltransferase</keyword>
<keyword id="KW-1185">Reference proteome</keyword>
<keyword id="KW-0949">S-adenosyl-L-methionine</keyword>
<keyword id="KW-0808">Transferase</keyword>
<comment type="function">
    <text evidence="1">Catalyzes the methylation of C-5 in cobalt-precorrin-7 to form cobalt-precorrin-8.</text>
</comment>
<comment type="catalytic activity">
    <reaction>
        <text>Co-precorrin-7 + S-adenosyl-L-methionine = Co-precorrin-8X + S-adenosyl-L-homocysteine + H(+)</text>
        <dbReference type="Rhea" id="RHEA:34591"/>
        <dbReference type="ChEBI" id="CHEBI:15378"/>
        <dbReference type="ChEBI" id="CHEBI:57856"/>
        <dbReference type="ChEBI" id="CHEBI:59789"/>
        <dbReference type="ChEBI" id="CHEBI:70791"/>
        <dbReference type="ChEBI" id="CHEBI:70792"/>
        <dbReference type="EC" id="2.1.1.289"/>
    </reaction>
</comment>
<comment type="pathway">
    <text>Cofactor biosynthesis; adenosylcobalamin biosynthesis; cob(II)yrinate a,c-diamide from sirohydrochlorin (anaerobic route): step 8/10.</text>
</comment>
<comment type="similarity">
    <text evidence="2">Belongs to the precorrin methyltransferase family.</text>
</comment>
<feature type="chain" id="PRO_0000150407" description="Cobalt-precorrin-7 C(5)-methyltransferase">
    <location>
        <begin position="1"/>
        <end position="201"/>
    </location>
</feature>